<comment type="function">
    <text evidence="1">This protein is one of the early assembly proteins of the 50S ribosomal subunit, although it is not seen to bind rRNA by itself. It is important during the early stages of 50S assembly.</text>
</comment>
<comment type="subunit">
    <text evidence="1">Part of the 50S ribosomal subunit.</text>
</comment>
<comment type="similarity">
    <text evidence="1">Belongs to the universal ribosomal protein uL13 family.</text>
</comment>
<accession>C0ZIL3</accession>
<name>RL13_BREBN</name>
<gene>
    <name evidence="1" type="primary">rplM</name>
    <name type="ordered locus">BBR47_02540</name>
</gene>
<organism>
    <name type="scientific">Brevibacillus brevis (strain 47 / JCM 6285 / NBRC 100599)</name>
    <dbReference type="NCBI Taxonomy" id="358681"/>
    <lineage>
        <taxon>Bacteria</taxon>
        <taxon>Bacillati</taxon>
        <taxon>Bacillota</taxon>
        <taxon>Bacilli</taxon>
        <taxon>Bacillales</taxon>
        <taxon>Paenibacillaceae</taxon>
        <taxon>Brevibacillus</taxon>
    </lineage>
</organism>
<feature type="chain" id="PRO_1000166854" description="Large ribosomal subunit protein uL13">
    <location>
        <begin position="1"/>
        <end position="145"/>
    </location>
</feature>
<protein>
    <recommendedName>
        <fullName evidence="1">Large ribosomal subunit protein uL13</fullName>
    </recommendedName>
    <alternativeName>
        <fullName evidence="2">50S ribosomal protein L13</fullName>
    </alternativeName>
</protein>
<evidence type="ECO:0000255" key="1">
    <source>
        <dbReference type="HAMAP-Rule" id="MF_01366"/>
    </source>
</evidence>
<evidence type="ECO:0000305" key="2"/>
<proteinExistence type="inferred from homology"/>
<reference key="1">
    <citation type="submission" date="2005-03" db="EMBL/GenBank/DDBJ databases">
        <title>Brevibacillus brevis strain 47, complete genome.</title>
        <authorList>
            <person name="Hosoyama A."/>
            <person name="Yamada R."/>
            <person name="Hongo Y."/>
            <person name="Terui Y."/>
            <person name="Ankai A."/>
            <person name="Masuyama W."/>
            <person name="Sekiguchi M."/>
            <person name="Takeda T."/>
            <person name="Asano K."/>
            <person name="Ohji S."/>
            <person name="Ichikawa N."/>
            <person name="Narita S."/>
            <person name="Aoki N."/>
            <person name="Miura H."/>
            <person name="Matsushita S."/>
            <person name="Sekigawa T."/>
            <person name="Yamagata H."/>
            <person name="Yoshikawa H."/>
            <person name="Udaka S."/>
            <person name="Tanikawa S."/>
            <person name="Fujita N."/>
        </authorList>
    </citation>
    <scope>NUCLEOTIDE SEQUENCE [LARGE SCALE GENOMIC DNA]</scope>
    <source>
        <strain>47 / JCM 6285 / NBRC 100599</strain>
    </source>
</reference>
<keyword id="KW-1185">Reference proteome</keyword>
<keyword id="KW-0687">Ribonucleoprotein</keyword>
<keyword id="KW-0689">Ribosomal protein</keyword>
<sequence length="145" mass="16329">MRTTYMAKPLEVERKWYIVDAEGQTLGRLASEVASILRGKLKPEFTPHVDAGDFVIVINADKVKLTGNKLNDKIYYTHSLYPGGLKKTTAGAMLNKRPDRMFELAVKGMLPKNSLGRQMFTKLKVYAGTEHPHAAQKPEVWQIRG</sequence>
<dbReference type="EMBL" id="AP008955">
    <property type="protein sequence ID" value="BAH41231.1"/>
    <property type="molecule type" value="Genomic_DNA"/>
</dbReference>
<dbReference type="RefSeq" id="WP_012684005.1">
    <property type="nucleotide sequence ID" value="NC_012491.1"/>
</dbReference>
<dbReference type="SMR" id="C0ZIL3"/>
<dbReference type="STRING" id="358681.BBR47_02540"/>
<dbReference type="GeneID" id="87588838"/>
<dbReference type="KEGG" id="bbe:BBR47_02540"/>
<dbReference type="eggNOG" id="COG0102">
    <property type="taxonomic scope" value="Bacteria"/>
</dbReference>
<dbReference type="HOGENOM" id="CLU_082184_2_2_9"/>
<dbReference type="Proteomes" id="UP000001877">
    <property type="component" value="Chromosome"/>
</dbReference>
<dbReference type="GO" id="GO:0022625">
    <property type="term" value="C:cytosolic large ribosomal subunit"/>
    <property type="evidence" value="ECO:0007669"/>
    <property type="project" value="TreeGrafter"/>
</dbReference>
<dbReference type="GO" id="GO:0003729">
    <property type="term" value="F:mRNA binding"/>
    <property type="evidence" value="ECO:0007669"/>
    <property type="project" value="TreeGrafter"/>
</dbReference>
<dbReference type="GO" id="GO:0003735">
    <property type="term" value="F:structural constituent of ribosome"/>
    <property type="evidence" value="ECO:0007669"/>
    <property type="project" value="InterPro"/>
</dbReference>
<dbReference type="GO" id="GO:0017148">
    <property type="term" value="P:negative regulation of translation"/>
    <property type="evidence" value="ECO:0007669"/>
    <property type="project" value="TreeGrafter"/>
</dbReference>
<dbReference type="GO" id="GO:0006412">
    <property type="term" value="P:translation"/>
    <property type="evidence" value="ECO:0007669"/>
    <property type="project" value="UniProtKB-UniRule"/>
</dbReference>
<dbReference type="CDD" id="cd00392">
    <property type="entry name" value="Ribosomal_L13"/>
    <property type="match status" value="1"/>
</dbReference>
<dbReference type="FunFam" id="3.90.1180.10:FF:000001">
    <property type="entry name" value="50S ribosomal protein L13"/>
    <property type="match status" value="1"/>
</dbReference>
<dbReference type="Gene3D" id="3.90.1180.10">
    <property type="entry name" value="Ribosomal protein L13"/>
    <property type="match status" value="1"/>
</dbReference>
<dbReference type="HAMAP" id="MF_01366">
    <property type="entry name" value="Ribosomal_uL13"/>
    <property type="match status" value="1"/>
</dbReference>
<dbReference type="InterPro" id="IPR005822">
    <property type="entry name" value="Ribosomal_uL13"/>
</dbReference>
<dbReference type="InterPro" id="IPR005823">
    <property type="entry name" value="Ribosomal_uL13_bac-type"/>
</dbReference>
<dbReference type="InterPro" id="IPR023563">
    <property type="entry name" value="Ribosomal_uL13_CS"/>
</dbReference>
<dbReference type="InterPro" id="IPR036899">
    <property type="entry name" value="Ribosomal_uL13_sf"/>
</dbReference>
<dbReference type="NCBIfam" id="TIGR01066">
    <property type="entry name" value="rplM_bact"/>
    <property type="match status" value="1"/>
</dbReference>
<dbReference type="PANTHER" id="PTHR11545:SF2">
    <property type="entry name" value="LARGE RIBOSOMAL SUBUNIT PROTEIN UL13M"/>
    <property type="match status" value="1"/>
</dbReference>
<dbReference type="PANTHER" id="PTHR11545">
    <property type="entry name" value="RIBOSOMAL PROTEIN L13"/>
    <property type="match status" value="1"/>
</dbReference>
<dbReference type="Pfam" id="PF00572">
    <property type="entry name" value="Ribosomal_L13"/>
    <property type="match status" value="1"/>
</dbReference>
<dbReference type="PIRSF" id="PIRSF002181">
    <property type="entry name" value="Ribosomal_L13"/>
    <property type="match status" value="1"/>
</dbReference>
<dbReference type="SUPFAM" id="SSF52161">
    <property type="entry name" value="Ribosomal protein L13"/>
    <property type="match status" value="1"/>
</dbReference>
<dbReference type="PROSITE" id="PS00783">
    <property type="entry name" value="RIBOSOMAL_L13"/>
    <property type="match status" value="1"/>
</dbReference>